<accession>C1DSU5</accession>
<evidence type="ECO:0000255" key="1">
    <source>
        <dbReference type="HAMAP-Rule" id="MF_00050"/>
    </source>
</evidence>
<sequence length="289" mass="30736">MAEITAALVKELRERTGQGMMECKKALVAAGGDIEKAIDDMRASGAIKAAKKAGNIAAEGSIAVKVSDDNKAAVIIEVNAQTDFLALQEDFKAFVAESLEKAFADKLTDAAPLIADRESAREALVAKCGENVNIRRLTRVEGDVVGAYLHGHRIGVLVNLKGGNPELAKEIAMHVAASNPQFLSPSQVSEEAVAKEKEIFLALNADKIAGKPENIVENMVKGRINKFLAEASLVEQPFVKDPEIKVGELAKKAGAEIVSFVRYEVGEGIEKAEVDFAAEVAAQLAASKQ</sequence>
<organism>
    <name type="scientific">Azotobacter vinelandii (strain DJ / ATCC BAA-1303)</name>
    <dbReference type="NCBI Taxonomy" id="322710"/>
    <lineage>
        <taxon>Bacteria</taxon>
        <taxon>Pseudomonadati</taxon>
        <taxon>Pseudomonadota</taxon>
        <taxon>Gammaproteobacteria</taxon>
        <taxon>Pseudomonadales</taxon>
        <taxon>Pseudomonadaceae</taxon>
        <taxon>Azotobacter</taxon>
    </lineage>
</organism>
<gene>
    <name evidence="1" type="primary">tsf</name>
    <name type="ordered locus">Avin_38980</name>
</gene>
<dbReference type="EMBL" id="CP001157">
    <property type="protein sequence ID" value="ACO80038.1"/>
    <property type="molecule type" value="Genomic_DNA"/>
</dbReference>
<dbReference type="RefSeq" id="WP_012702413.1">
    <property type="nucleotide sequence ID" value="NC_012560.1"/>
</dbReference>
<dbReference type="SMR" id="C1DSU5"/>
<dbReference type="STRING" id="322710.Avin_38980"/>
<dbReference type="EnsemblBacteria" id="ACO80038">
    <property type="protein sequence ID" value="ACO80038"/>
    <property type="gene ID" value="Avin_38980"/>
</dbReference>
<dbReference type="GeneID" id="88186856"/>
<dbReference type="KEGG" id="avn:Avin_38980"/>
<dbReference type="eggNOG" id="COG0264">
    <property type="taxonomic scope" value="Bacteria"/>
</dbReference>
<dbReference type="HOGENOM" id="CLU_047155_0_2_6"/>
<dbReference type="OrthoDB" id="9808348at2"/>
<dbReference type="Proteomes" id="UP000002424">
    <property type="component" value="Chromosome"/>
</dbReference>
<dbReference type="GO" id="GO:0005737">
    <property type="term" value="C:cytoplasm"/>
    <property type="evidence" value="ECO:0007669"/>
    <property type="project" value="UniProtKB-SubCell"/>
</dbReference>
<dbReference type="GO" id="GO:0003746">
    <property type="term" value="F:translation elongation factor activity"/>
    <property type="evidence" value="ECO:0007669"/>
    <property type="project" value="UniProtKB-UniRule"/>
</dbReference>
<dbReference type="CDD" id="cd14275">
    <property type="entry name" value="UBA_EF-Ts"/>
    <property type="match status" value="1"/>
</dbReference>
<dbReference type="FunFam" id="1.10.286.20:FF:000001">
    <property type="entry name" value="Elongation factor Ts"/>
    <property type="match status" value="1"/>
</dbReference>
<dbReference type="FunFam" id="1.10.8.10:FF:000001">
    <property type="entry name" value="Elongation factor Ts"/>
    <property type="match status" value="1"/>
</dbReference>
<dbReference type="Gene3D" id="1.10.286.20">
    <property type="match status" value="1"/>
</dbReference>
<dbReference type="Gene3D" id="1.10.8.10">
    <property type="entry name" value="DNA helicase RuvA subunit, C-terminal domain"/>
    <property type="match status" value="1"/>
</dbReference>
<dbReference type="Gene3D" id="3.30.479.20">
    <property type="entry name" value="Elongation factor Ts, dimerisation domain"/>
    <property type="match status" value="2"/>
</dbReference>
<dbReference type="HAMAP" id="MF_00050">
    <property type="entry name" value="EF_Ts"/>
    <property type="match status" value="1"/>
</dbReference>
<dbReference type="InterPro" id="IPR036402">
    <property type="entry name" value="EF-Ts_dimer_sf"/>
</dbReference>
<dbReference type="InterPro" id="IPR001816">
    <property type="entry name" value="Transl_elong_EFTs/EF1B"/>
</dbReference>
<dbReference type="InterPro" id="IPR014039">
    <property type="entry name" value="Transl_elong_EFTs/EF1B_dimer"/>
</dbReference>
<dbReference type="InterPro" id="IPR018101">
    <property type="entry name" value="Transl_elong_Ts_CS"/>
</dbReference>
<dbReference type="InterPro" id="IPR009060">
    <property type="entry name" value="UBA-like_sf"/>
</dbReference>
<dbReference type="NCBIfam" id="TIGR00116">
    <property type="entry name" value="tsf"/>
    <property type="match status" value="1"/>
</dbReference>
<dbReference type="PANTHER" id="PTHR11741">
    <property type="entry name" value="ELONGATION FACTOR TS"/>
    <property type="match status" value="1"/>
</dbReference>
<dbReference type="PANTHER" id="PTHR11741:SF0">
    <property type="entry name" value="ELONGATION FACTOR TS, MITOCHONDRIAL"/>
    <property type="match status" value="1"/>
</dbReference>
<dbReference type="Pfam" id="PF00889">
    <property type="entry name" value="EF_TS"/>
    <property type="match status" value="1"/>
</dbReference>
<dbReference type="SUPFAM" id="SSF54713">
    <property type="entry name" value="Elongation factor Ts (EF-Ts), dimerisation domain"/>
    <property type="match status" value="2"/>
</dbReference>
<dbReference type="SUPFAM" id="SSF46934">
    <property type="entry name" value="UBA-like"/>
    <property type="match status" value="1"/>
</dbReference>
<dbReference type="PROSITE" id="PS01126">
    <property type="entry name" value="EF_TS_1"/>
    <property type="match status" value="1"/>
</dbReference>
<dbReference type="PROSITE" id="PS01127">
    <property type="entry name" value="EF_TS_2"/>
    <property type="match status" value="1"/>
</dbReference>
<protein>
    <recommendedName>
        <fullName evidence="1">Elongation factor Ts</fullName>
        <shortName evidence="1">EF-Ts</shortName>
    </recommendedName>
</protein>
<name>EFTS_AZOVD</name>
<keyword id="KW-0963">Cytoplasm</keyword>
<keyword id="KW-0251">Elongation factor</keyword>
<keyword id="KW-0648">Protein biosynthesis</keyword>
<comment type="function">
    <text evidence="1">Associates with the EF-Tu.GDP complex and induces the exchange of GDP to GTP. It remains bound to the aminoacyl-tRNA.EF-Tu.GTP complex up to the GTP hydrolysis stage on the ribosome.</text>
</comment>
<comment type="subcellular location">
    <subcellularLocation>
        <location evidence="1">Cytoplasm</location>
    </subcellularLocation>
</comment>
<comment type="similarity">
    <text evidence="1">Belongs to the EF-Ts family.</text>
</comment>
<reference key="1">
    <citation type="journal article" date="2009" name="J. Bacteriol.">
        <title>Genome sequence of Azotobacter vinelandii, an obligate aerobe specialized to support diverse anaerobic metabolic processes.</title>
        <authorList>
            <person name="Setubal J.C."/>
            <person name="Dos Santos P."/>
            <person name="Goldman B.S."/>
            <person name="Ertesvaag H."/>
            <person name="Espin G."/>
            <person name="Rubio L.M."/>
            <person name="Valla S."/>
            <person name="Almeida N.F."/>
            <person name="Balasubramanian D."/>
            <person name="Cromes L."/>
            <person name="Curatti L."/>
            <person name="Du Z."/>
            <person name="Godsy E."/>
            <person name="Goodner B."/>
            <person name="Hellner-Burris K."/>
            <person name="Hernandez J.A."/>
            <person name="Houmiel K."/>
            <person name="Imperial J."/>
            <person name="Kennedy C."/>
            <person name="Larson T.J."/>
            <person name="Latreille P."/>
            <person name="Ligon L.S."/>
            <person name="Lu J."/>
            <person name="Maerk M."/>
            <person name="Miller N.M."/>
            <person name="Norton S."/>
            <person name="O'Carroll I.P."/>
            <person name="Paulsen I."/>
            <person name="Raulfs E.C."/>
            <person name="Roemer R."/>
            <person name="Rosser J."/>
            <person name="Segura D."/>
            <person name="Slater S."/>
            <person name="Stricklin S.L."/>
            <person name="Studholme D.J."/>
            <person name="Sun J."/>
            <person name="Viana C.J."/>
            <person name="Wallin E."/>
            <person name="Wang B."/>
            <person name="Wheeler C."/>
            <person name="Zhu H."/>
            <person name="Dean D.R."/>
            <person name="Dixon R."/>
            <person name="Wood D."/>
        </authorList>
    </citation>
    <scope>NUCLEOTIDE SEQUENCE [LARGE SCALE GENOMIC DNA]</scope>
    <source>
        <strain>DJ / ATCC BAA-1303</strain>
    </source>
</reference>
<feature type="chain" id="PRO_1000202231" description="Elongation factor Ts">
    <location>
        <begin position="1"/>
        <end position="289"/>
    </location>
</feature>
<feature type="region of interest" description="Involved in Mg(2+) ion dislocation from EF-Tu" evidence="1">
    <location>
        <begin position="82"/>
        <end position="85"/>
    </location>
</feature>
<proteinExistence type="inferred from homology"/>